<gene>
    <name evidence="1" type="primary">ligA</name>
    <name type="ordered locus">CCNA_01590</name>
</gene>
<protein>
    <recommendedName>
        <fullName evidence="1">DNA ligase</fullName>
        <ecNumber evidence="1">6.5.1.2</ecNumber>
    </recommendedName>
    <alternativeName>
        <fullName evidence="1">Polydeoxyribonucleotide synthase [NAD(+)]</fullName>
    </alternativeName>
</protein>
<dbReference type="EC" id="6.5.1.2" evidence="1"/>
<dbReference type="EMBL" id="CP001340">
    <property type="protein sequence ID" value="ACL95055.1"/>
    <property type="molecule type" value="Genomic_DNA"/>
</dbReference>
<dbReference type="RefSeq" id="WP_010919396.1">
    <property type="nucleotide sequence ID" value="NC_011916.1"/>
</dbReference>
<dbReference type="RefSeq" id="YP_002516963.1">
    <property type="nucleotide sequence ID" value="NC_011916.1"/>
</dbReference>
<dbReference type="SMR" id="B8H5Y7"/>
<dbReference type="GeneID" id="7331568"/>
<dbReference type="KEGG" id="ccs:CCNA_01590"/>
<dbReference type="PATRIC" id="fig|565050.3.peg.1569"/>
<dbReference type="HOGENOM" id="CLU_007764_2_1_5"/>
<dbReference type="OrthoDB" id="9759736at2"/>
<dbReference type="PhylomeDB" id="B8H5Y7"/>
<dbReference type="Proteomes" id="UP000001364">
    <property type="component" value="Chromosome"/>
</dbReference>
<dbReference type="GO" id="GO:0005829">
    <property type="term" value="C:cytosol"/>
    <property type="evidence" value="ECO:0007669"/>
    <property type="project" value="TreeGrafter"/>
</dbReference>
<dbReference type="GO" id="GO:0003911">
    <property type="term" value="F:DNA ligase (NAD+) activity"/>
    <property type="evidence" value="ECO:0007669"/>
    <property type="project" value="UniProtKB-UniRule"/>
</dbReference>
<dbReference type="GO" id="GO:0046872">
    <property type="term" value="F:metal ion binding"/>
    <property type="evidence" value="ECO:0007669"/>
    <property type="project" value="UniProtKB-KW"/>
</dbReference>
<dbReference type="GO" id="GO:0006281">
    <property type="term" value="P:DNA repair"/>
    <property type="evidence" value="ECO:0007669"/>
    <property type="project" value="UniProtKB-KW"/>
</dbReference>
<dbReference type="GO" id="GO:0006260">
    <property type="term" value="P:DNA replication"/>
    <property type="evidence" value="ECO:0007669"/>
    <property type="project" value="UniProtKB-KW"/>
</dbReference>
<dbReference type="CDD" id="cd17748">
    <property type="entry name" value="BRCT_DNA_ligase_like"/>
    <property type="match status" value="1"/>
</dbReference>
<dbReference type="CDD" id="cd00114">
    <property type="entry name" value="LIGANc"/>
    <property type="match status" value="1"/>
</dbReference>
<dbReference type="FunFam" id="1.10.150.20:FF:000007">
    <property type="entry name" value="DNA ligase"/>
    <property type="match status" value="1"/>
</dbReference>
<dbReference type="FunFam" id="2.40.50.140:FF:000012">
    <property type="entry name" value="DNA ligase"/>
    <property type="match status" value="1"/>
</dbReference>
<dbReference type="FunFam" id="3.30.470.30:FF:000001">
    <property type="entry name" value="DNA ligase"/>
    <property type="match status" value="1"/>
</dbReference>
<dbReference type="Gene3D" id="1.10.150.20">
    <property type="entry name" value="5' to 3' exonuclease, C-terminal subdomain"/>
    <property type="match status" value="3"/>
</dbReference>
<dbReference type="Gene3D" id="3.40.50.10190">
    <property type="entry name" value="BRCT domain"/>
    <property type="match status" value="1"/>
</dbReference>
<dbReference type="Gene3D" id="3.30.470.30">
    <property type="entry name" value="DNA ligase/mRNA capping enzyme"/>
    <property type="match status" value="1"/>
</dbReference>
<dbReference type="Gene3D" id="1.10.287.610">
    <property type="entry name" value="Helix hairpin bin"/>
    <property type="match status" value="1"/>
</dbReference>
<dbReference type="Gene3D" id="2.40.50.140">
    <property type="entry name" value="Nucleic acid-binding proteins"/>
    <property type="match status" value="1"/>
</dbReference>
<dbReference type="HAMAP" id="MF_01588">
    <property type="entry name" value="DNA_ligase_A"/>
    <property type="match status" value="1"/>
</dbReference>
<dbReference type="InterPro" id="IPR001357">
    <property type="entry name" value="BRCT_dom"/>
</dbReference>
<dbReference type="InterPro" id="IPR036420">
    <property type="entry name" value="BRCT_dom_sf"/>
</dbReference>
<dbReference type="InterPro" id="IPR001679">
    <property type="entry name" value="DNA_ligase"/>
</dbReference>
<dbReference type="InterPro" id="IPR018239">
    <property type="entry name" value="DNA_ligase_AS"/>
</dbReference>
<dbReference type="InterPro" id="IPR033136">
    <property type="entry name" value="DNA_ligase_CS"/>
</dbReference>
<dbReference type="InterPro" id="IPR013839">
    <property type="entry name" value="DNAligase_adenylation"/>
</dbReference>
<dbReference type="InterPro" id="IPR013840">
    <property type="entry name" value="DNAligase_N"/>
</dbReference>
<dbReference type="InterPro" id="IPR012340">
    <property type="entry name" value="NA-bd_OB-fold"/>
</dbReference>
<dbReference type="InterPro" id="IPR004150">
    <property type="entry name" value="NAD_DNA_ligase_OB"/>
</dbReference>
<dbReference type="InterPro" id="IPR010994">
    <property type="entry name" value="RuvA_2-like"/>
</dbReference>
<dbReference type="NCBIfam" id="TIGR00575">
    <property type="entry name" value="dnlj"/>
    <property type="match status" value="1"/>
</dbReference>
<dbReference type="NCBIfam" id="NF005932">
    <property type="entry name" value="PRK07956.1"/>
    <property type="match status" value="1"/>
</dbReference>
<dbReference type="PANTHER" id="PTHR23389">
    <property type="entry name" value="CHROMOSOME TRANSMISSION FIDELITY FACTOR 18"/>
    <property type="match status" value="1"/>
</dbReference>
<dbReference type="PANTHER" id="PTHR23389:SF9">
    <property type="entry name" value="DNA LIGASE"/>
    <property type="match status" value="1"/>
</dbReference>
<dbReference type="Pfam" id="PF00533">
    <property type="entry name" value="BRCT"/>
    <property type="match status" value="1"/>
</dbReference>
<dbReference type="Pfam" id="PF01653">
    <property type="entry name" value="DNA_ligase_aden"/>
    <property type="match status" value="1"/>
</dbReference>
<dbReference type="Pfam" id="PF03120">
    <property type="entry name" value="DNA_ligase_OB"/>
    <property type="match status" value="1"/>
</dbReference>
<dbReference type="PIRSF" id="PIRSF001604">
    <property type="entry name" value="LigA"/>
    <property type="match status" value="1"/>
</dbReference>
<dbReference type="SMART" id="SM00292">
    <property type="entry name" value="BRCT"/>
    <property type="match status" value="1"/>
</dbReference>
<dbReference type="SMART" id="SM00532">
    <property type="entry name" value="LIGANc"/>
    <property type="match status" value="1"/>
</dbReference>
<dbReference type="SUPFAM" id="SSF52113">
    <property type="entry name" value="BRCT domain"/>
    <property type="match status" value="1"/>
</dbReference>
<dbReference type="SUPFAM" id="SSF56091">
    <property type="entry name" value="DNA ligase/mRNA capping enzyme, catalytic domain"/>
    <property type="match status" value="1"/>
</dbReference>
<dbReference type="SUPFAM" id="SSF50249">
    <property type="entry name" value="Nucleic acid-binding proteins"/>
    <property type="match status" value="1"/>
</dbReference>
<dbReference type="SUPFAM" id="SSF47781">
    <property type="entry name" value="RuvA domain 2-like"/>
    <property type="match status" value="2"/>
</dbReference>
<dbReference type="PROSITE" id="PS50172">
    <property type="entry name" value="BRCT"/>
    <property type="match status" value="1"/>
</dbReference>
<dbReference type="PROSITE" id="PS01055">
    <property type="entry name" value="DNA_LIGASE_N1"/>
    <property type="match status" value="1"/>
</dbReference>
<dbReference type="PROSITE" id="PS01056">
    <property type="entry name" value="DNA_LIGASE_N2"/>
    <property type="match status" value="1"/>
</dbReference>
<sequence length="783" mass="84901">MSQIPVADLTEAQAVEDLERLADLLATHDIAYHQEDNPTVSDAEYDALKRRNLDIETRFPHLVRDNSPSMRVGATRAEQFAPVEHGVPMLSLDNAFSNDEAIEFDARVRRFLRISPSETVAYTAEPKIDGLSASLRYEKGVLVQGATRGDGRVGEDVTANLRTIADIPHRLKGSGWPDVIEVRGEVYVELAAFAAFNKAAEEAGQRTYANPRNFAAGSLRQIDPKISAQRPLRFFGYAWGLVSEGFADSQWGALERLAEWGFVTTAPPAQRVLNAQGLLDIYAQFEVLRPTLGFDIDGVVYKVDDLELQRRLGFVSRSPRWAIARKFPAQRARTVLEAIDLQVGRTGAITPVARLKPVTVGGVSVTNATLHNGDEIARLDVRVGDTVVIQRAGDVIPQIVEVALDARPDPAPPPYEFPHVCPCPLQTPLAREVTASGQESVVRRCTGEFACPFQRVEHLRHFVSRRAFDIEGLGEKQLQAFFEEGWITEPADIFKLARDAEKLAVLREREGYGETSVANLVKGIEARRTIGMDRMIYGLGARDIGETTSTVLARNFDRFEDLQAAAEAAARALPGETYLELSTAPGVGPKALDMLVEAGKGGVVADPWPQTDDLELKIGHAVPKLTKPARAALAQRYGTWDAFADGLVAAASGAPGDDYLHLAAIDGVGPVAAQSLARFFAEDHNRQKVANLVAELDIQPVAKPKTDTAVAGKTIVFTGSLEKMTRDEAKAQAEGLGAKVASSVSKKTDLVVAGPGAGSKLKTATDLGIQVMTEDEWLELVAG</sequence>
<evidence type="ECO:0000255" key="1">
    <source>
        <dbReference type="HAMAP-Rule" id="MF_01588"/>
    </source>
</evidence>
<proteinExistence type="inferred from homology"/>
<feature type="chain" id="PRO_0000380329" description="DNA ligase">
    <location>
        <begin position="1"/>
        <end position="783"/>
    </location>
</feature>
<feature type="domain" description="BRCT" evidence="1">
    <location>
        <begin position="705"/>
        <end position="783"/>
    </location>
</feature>
<feature type="active site" description="N6-AMP-lysine intermediate" evidence="1">
    <location>
        <position position="127"/>
    </location>
</feature>
<feature type="binding site" evidence="1">
    <location>
        <begin position="42"/>
        <end position="46"/>
    </location>
    <ligand>
        <name>NAD(+)</name>
        <dbReference type="ChEBI" id="CHEBI:57540"/>
    </ligand>
</feature>
<feature type="binding site" evidence="1">
    <location>
        <begin position="91"/>
        <end position="92"/>
    </location>
    <ligand>
        <name>NAD(+)</name>
        <dbReference type="ChEBI" id="CHEBI:57540"/>
    </ligand>
</feature>
<feature type="binding site" evidence="1">
    <location>
        <position position="125"/>
    </location>
    <ligand>
        <name>NAD(+)</name>
        <dbReference type="ChEBI" id="CHEBI:57540"/>
    </ligand>
</feature>
<feature type="binding site" evidence="1">
    <location>
        <position position="148"/>
    </location>
    <ligand>
        <name>NAD(+)</name>
        <dbReference type="ChEBI" id="CHEBI:57540"/>
    </ligand>
</feature>
<feature type="binding site" evidence="1">
    <location>
        <position position="185"/>
    </location>
    <ligand>
        <name>NAD(+)</name>
        <dbReference type="ChEBI" id="CHEBI:57540"/>
    </ligand>
</feature>
<feature type="binding site" evidence="1">
    <location>
        <position position="302"/>
    </location>
    <ligand>
        <name>NAD(+)</name>
        <dbReference type="ChEBI" id="CHEBI:57540"/>
    </ligand>
</feature>
<feature type="binding site" evidence="1">
    <location>
        <position position="326"/>
    </location>
    <ligand>
        <name>NAD(+)</name>
        <dbReference type="ChEBI" id="CHEBI:57540"/>
    </ligand>
</feature>
<feature type="binding site" evidence="1">
    <location>
        <position position="421"/>
    </location>
    <ligand>
        <name>Zn(2+)</name>
        <dbReference type="ChEBI" id="CHEBI:29105"/>
    </ligand>
</feature>
<feature type="binding site" evidence="1">
    <location>
        <position position="423"/>
    </location>
    <ligand>
        <name>Zn(2+)</name>
        <dbReference type="ChEBI" id="CHEBI:29105"/>
    </ligand>
</feature>
<feature type="binding site" evidence="1">
    <location>
        <position position="445"/>
    </location>
    <ligand>
        <name>Zn(2+)</name>
        <dbReference type="ChEBI" id="CHEBI:29105"/>
    </ligand>
</feature>
<feature type="binding site" evidence="1">
    <location>
        <position position="451"/>
    </location>
    <ligand>
        <name>Zn(2+)</name>
        <dbReference type="ChEBI" id="CHEBI:29105"/>
    </ligand>
</feature>
<keyword id="KW-0227">DNA damage</keyword>
<keyword id="KW-0234">DNA repair</keyword>
<keyword id="KW-0235">DNA replication</keyword>
<keyword id="KW-0436">Ligase</keyword>
<keyword id="KW-0460">Magnesium</keyword>
<keyword id="KW-0464">Manganese</keyword>
<keyword id="KW-0479">Metal-binding</keyword>
<keyword id="KW-0520">NAD</keyword>
<keyword id="KW-1185">Reference proteome</keyword>
<keyword id="KW-0862">Zinc</keyword>
<organism>
    <name type="scientific">Caulobacter vibrioides (strain NA1000 / CB15N)</name>
    <name type="common">Caulobacter crescentus</name>
    <dbReference type="NCBI Taxonomy" id="565050"/>
    <lineage>
        <taxon>Bacteria</taxon>
        <taxon>Pseudomonadati</taxon>
        <taxon>Pseudomonadota</taxon>
        <taxon>Alphaproteobacteria</taxon>
        <taxon>Caulobacterales</taxon>
        <taxon>Caulobacteraceae</taxon>
        <taxon>Caulobacter</taxon>
    </lineage>
</organism>
<comment type="function">
    <text evidence="1">DNA ligase that catalyzes the formation of phosphodiester linkages between 5'-phosphoryl and 3'-hydroxyl groups in double-stranded DNA using NAD as a coenzyme and as the energy source for the reaction. It is essential for DNA replication and repair of damaged DNA.</text>
</comment>
<comment type="catalytic activity">
    <reaction evidence="1">
        <text>NAD(+) + (deoxyribonucleotide)n-3'-hydroxyl + 5'-phospho-(deoxyribonucleotide)m = (deoxyribonucleotide)n+m + AMP + beta-nicotinamide D-nucleotide.</text>
        <dbReference type="EC" id="6.5.1.2"/>
    </reaction>
</comment>
<comment type="cofactor">
    <cofactor evidence="1">
        <name>Mg(2+)</name>
        <dbReference type="ChEBI" id="CHEBI:18420"/>
    </cofactor>
    <cofactor evidence="1">
        <name>Mn(2+)</name>
        <dbReference type="ChEBI" id="CHEBI:29035"/>
    </cofactor>
</comment>
<comment type="similarity">
    <text evidence="1">Belongs to the NAD-dependent DNA ligase family. LigA subfamily.</text>
</comment>
<name>DNLJ_CAUVN</name>
<reference key="1">
    <citation type="journal article" date="2010" name="J. Bacteriol.">
        <title>The genetic basis of laboratory adaptation in Caulobacter crescentus.</title>
        <authorList>
            <person name="Marks M.E."/>
            <person name="Castro-Rojas C.M."/>
            <person name="Teiling C."/>
            <person name="Du L."/>
            <person name="Kapatral V."/>
            <person name="Walunas T.L."/>
            <person name="Crosson S."/>
        </authorList>
    </citation>
    <scope>NUCLEOTIDE SEQUENCE [LARGE SCALE GENOMIC DNA]</scope>
    <source>
        <strain>NA1000 / CB15N</strain>
    </source>
</reference>
<accession>B8H5Y7</accession>